<accession>J7LMP2</accession>
<feature type="chain" id="PRO_0000421952" description="Bicyclogermacrene synthase">
    <location>
        <begin position="1"/>
        <end position="565"/>
    </location>
</feature>
<feature type="short sequence motif" description="DDXXD motif">
    <location>
        <begin position="317"/>
        <end position="321"/>
    </location>
</feature>
<feature type="binding site" evidence="1">
    <location>
        <position position="317"/>
    </location>
    <ligand>
        <name>Mg(2+)</name>
        <dbReference type="ChEBI" id="CHEBI:18420"/>
        <label>1</label>
    </ligand>
</feature>
<feature type="binding site" evidence="1">
    <location>
        <position position="317"/>
    </location>
    <ligand>
        <name>Mg(2+)</name>
        <dbReference type="ChEBI" id="CHEBI:18420"/>
        <label>2</label>
    </ligand>
</feature>
<feature type="binding site" evidence="1">
    <location>
        <position position="321"/>
    </location>
    <ligand>
        <name>Mg(2+)</name>
        <dbReference type="ChEBI" id="CHEBI:18420"/>
        <label>1</label>
    </ligand>
</feature>
<feature type="binding site" evidence="1">
    <location>
        <position position="321"/>
    </location>
    <ligand>
        <name>Mg(2+)</name>
        <dbReference type="ChEBI" id="CHEBI:18420"/>
        <label>2</label>
    </ligand>
</feature>
<feature type="binding site" evidence="1">
    <location>
        <position position="461"/>
    </location>
    <ligand>
        <name>Mg(2+)</name>
        <dbReference type="ChEBI" id="CHEBI:18420"/>
        <label>3</label>
    </ligand>
</feature>
<feature type="binding site" evidence="1">
    <location>
        <position position="469"/>
    </location>
    <ligand>
        <name>Mg(2+)</name>
        <dbReference type="ChEBI" id="CHEBI:18420"/>
        <label>3</label>
    </ligand>
</feature>
<evidence type="ECO:0000250" key="1"/>
<evidence type="ECO:0000269" key="2">
    <source>
    </source>
</evidence>
<evidence type="ECO:0000305" key="3"/>
<sequence length="565" mass="66477">MDLAKQISVVDSSLQDVTRNITRPLANFHPNVWGDRFLLNNSDQVQLKMNALDKEEAIEKLKEGVRRKLKEASNDYMRLIQMVDAIQRLGFAYHFEEEIDQALQCLFERHHEYCKDNHDLYANSLSFRLLRQQGYRVSCEIFEKFKDVKGNFMLPNNGEVMGVLEFYEATHLRVHGEDLLDHDFVLSREYLESVLPSLTNPLAEQVDHALHQHSNRRGLSRLEARHYMPVYEQYASHDQYLLKLAKLDFNMLQSLHKEELSELSRWWKGIDVARNLPYARDRIVETYFWILGVYFEPEYAAARKILVKVQSLFSIIDDTFDAYGTFEELQIFTQALERWSISCLDQLPDYMKLIYKTVLEVYDEIEEEMIKQGTSYRTAYGIEAIKSLTRNYFMEAEWREKKYTPTTDEHMRLALKTCGYTSLIIISFLGMGEVVKREAFDWVLSEPDFVKASLTINRLVDDIVGHEDEQKRNHVVSSVECYVQESKTSREDAVYELNSRVESTWKDLNEGFLKPTKFPSPLLYRVLNYSRVIEVMYTKGDWYTNVGPEMQDYIRQLLIDPVNVE</sequence>
<comment type="function">
    <text evidence="2">Sesquiterpene synthase converting farnesyl diphosphate to bicyclogermacrene as the major product.</text>
</comment>
<comment type="catalytic activity">
    <reaction evidence="2">
        <text>(2E,6E)-farnesyl diphosphate = bicyclogermacrene + diphosphate</text>
        <dbReference type="Rhea" id="RHEA:31999"/>
        <dbReference type="ChEBI" id="CHEBI:33019"/>
        <dbReference type="ChEBI" id="CHEBI:63709"/>
        <dbReference type="ChEBI" id="CHEBI:175763"/>
        <dbReference type="EC" id="4.2.3.100"/>
    </reaction>
</comment>
<comment type="cofactor">
    <cofactor evidence="1">
        <name>Mg(2+)</name>
        <dbReference type="ChEBI" id="CHEBI:18420"/>
    </cofactor>
    <text evidence="1">Binds 3 Mg(2+) ions per subunit.</text>
</comment>
<comment type="pathway">
    <text>Secondary metabolite biosynthesis; terpenoid biosynthesis.</text>
</comment>
<comment type="domain">
    <text evidence="1">The Asp-Asp-Xaa-Xaa-Asp/Glu (DDXXD/E) motif is important for the catalytic activity, presumably through binding to Mg(2+).</text>
</comment>
<comment type="similarity">
    <text evidence="3">Belongs to the terpene synthase family.</text>
</comment>
<name>TPS5_PHYDL</name>
<dbReference type="EC" id="4.2.3.100"/>
<dbReference type="EMBL" id="JQ731633">
    <property type="protein sequence ID" value="AFR23369.1"/>
    <property type="molecule type" value="mRNA"/>
</dbReference>
<dbReference type="SMR" id="J7LMP2"/>
<dbReference type="UniPathway" id="UPA00213"/>
<dbReference type="GO" id="GO:0000287">
    <property type="term" value="F:magnesium ion binding"/>
    <property type="evidence" value="ECO:0007669"/>
    <property type="project" value="InterPro"/>
</dbReference>
<dbReference type="GO" id="GO:0010334">
    <property type="term" value="F:sesquiterpene synthase activity"/>
    <property type="evidence" value="ECO:0000314"/>
    <property type="project" value="UniProtKB"/>
</dbReference>
<dbReference type="GO" id="GO:1901934">
    <property type="term" value="P:bicyclogermacrene biosynthetic process"/>
    <property type="evidence" value="ECO:0000314"/>
    <property type="project" value="UniProtKB"/>
</dbReference>
<dbReference type="GO" id="GO:0016102">
    <property type="term" value="P:diterpenoid biosynthetic process"/>
    <property type="evidence" value="ECO:0007669"/>
    <property type="project" value="InterPro"/>
</dbReference>
<dbReference type="GO" id="GO:0045339">
    <property type="term" value="P:farnesyl diphosphate catabolic process"/>
    <property type="evidence" value="ECO:0000314"/>
    <property type="project" value="UniProtKB"/>
</dbReference>
<dbReference type="CDD" id="cd00684">
    <property type="entry name" value="Terpene_cyclase_plant_C1"/>
    <property type="match status" value="1"/>
</dbReference>
<dbReference type="FunFam" id="1.10.600.10:FF:000007">
    <property type="entry name" value="Isoprene synthase, chloroplastic"/>
    <property type="match status" value="1"/>
</dbReference>
<dbReference type="FunFam" id="1.50.10.130:FF:000001">
    <property type="entry name" value="Isoprene synthase, chloroplastic"/>
    <property type="match status" value="1"/>
</dbReference>
<dbReference type="Gene3D" id="1.10.600.10">
    <property type="entry name" value="Farnesyl Diphosphate Synthase"/>
    <property type="match status" value="1"/>
</dbReference>
<dbReference type="Gene3D" id="1.50.10.130">
    <property type="entry name" value="Terpene synthase, N-terminal domain"/>
    <property type="match status" value="1"/>
</dbReference>
<dbReference type="InterPro" id="IPR008949">
    <property type="entry name" value="Isoprenoid_synthase_dom_sf"/>
</dbReference>
<dbReference type="InterPro" id="IPR034741">
    <property type="entry name" value="Terpene_cyclase-like_1_C"/>
</dbReference>
<dbReference type="InterPro" id="IPR044814">
    <property type="entry name" value="Terpene_cyclase_plant_C1"/>
</dbReference>
<dbReference type="InterPro" id="IPR001906">
    <property type="entry name" value="Terpene_synth_N"/>
</dbReference>
<dbReference type="InterPro" id="IPR036965">
    <property type="entry name" value="Terpene_synth_N_sf"/>
</dbReference>
<dbReference type="InterPro" id="IPR050148">
    <property type="entry name" value="Terpene_synthase-like"/>
</dbReference>
<dbReference type="InterPro" id="IPR005630">
    <property type="entry name" value="Terpene_synthase_metal-bd"/>
</dbReference>
<dbReference type="InterPro" id="IPR008930">
    <property type="entry name" value="Terpenoid_cyclase/PrenylTrfase"/>
</dbReference>
<dbReference type="PANTHER" id="PTHR31225:SF93">
    <property type="entry name" value="ALPHA-HUMULENE_(-)-(E)-BETA-CARYOPHYLLENE SYNTHASE"/>
    <property type="match status" value="1"/>
</dbReference>
<dbReference type="PANTHER" id="PTHR31225">
    <property type="entry name" value="OS04G0344100 PROTEIN-RELATED"/>
    <property type="match status" value="1"/>
</dbReference>
<dbReference type="Pfam" id="PF01397">
    <property type="entry name" value="Terpene_synth"/>
    <property type="match status" value="1"/>
</dbReference>
<dbReference type="Pfam" id="PF03936">
    <property type="entry name" value="Terpene_synth_C"/>
    <property type="match status" value="1"/>
</dbReference>
<dbReference type="SFLD" id="SFLDS00005">
    <property type="entry name" value="Isoprenoid_Synthase_Type_I"/>
    <property type="match status" value="1"/>
</dbReference>
<dbReference type="SFLD" id="SFLDG01019">
    <property type="entry name" value="Terpene_Cyclase_Like_1_C_Termi"/>
    <property type="match status" value="1"/>
</dbReference>
<dbReference type="SUPFAM" id="SSF48239">
    <property type="entry name" value="Terpenoid cyclases/Protein prenyltransferases"/>
    <property type="match status" value="1"/>
</dbReference>
<dbReference type="SUPFAM" id="SSF48576">
    <property type="entry name" value="Terpenoid synthases"/>
    <property type="match status" value="1"/>
</dbReference>
<keyword id="KW-0456">Lyase</keyword>
<keyword id="KW-0460">Magnesium</keyword>
<keyword id="KW-0479">Metal-binding</keyword>
<reference key="1">
    <citation type="journal article" date="2012" name="Arch. Biochem. Biophys.">
        <title>Molecular cloning and characterization of (+)-epi-alpha-bisabolol synthase, catalyzing the first step in the biosynthesis of the natural sweetener, hernandulcin, in Lippia dulcis.</title>
        <authorList>
            <person name="Attia M."/>
            <person name="Kim S.U."/>
            <person name="Ro D.K."/>
        </authorList>
    </citation>
    <scope>NUCLEOTIDE SEQUENCE [MRNA]</scope>
    <scope>FUNCTION</scope>
    <scope>CATALYTIC ACTIVITY</scope>
</reference>
<proteinExistence type="evidence at protein level"/>
<organism>
    <name type="scientific">Phyla dulcis</name>
    <name type="common">Aztec sweet herb</name>
    <name type="synonym">Lippia dulcis</name>
    <dbReference type="NCBI Taxonomy" id="542674"/>
    <lineage>
        <taxon>Eukaryota</taxon>
        <taxon>Viridiplantae</taxon>
        <taxon>Streptophyta</taxon>
        <taxon>Embryophyta</taxon>
        <taxon>Tracheophyta</taxon>
        <taxon>Spermatophyta</taxon>
        <taxon>Magnoliopsida</taxon>
        <taxon>eudicotyledons</taxon>
        <taxon>Gunneridae</taxon>
        <taxon>Pentapetalae</taxon>
        <taxon>asterids</taxon>
        <taxon>lamiids</taxon>
        <taxon>Lamiales</taxon>
        <taxon>Verbenaceae</taxon>
        <taxon>Lantaneae</taxon>
        <taxon>Phyla</taxon>
    </lineage>
</organism>
<protein>
    <recommendedName>
        <fullName>Bicyclogermacrene synthase</fullName>
        <ecNumber>4.2.3.100</ecNumber>
    </recommendedName>
    <alternativeName>
        <fullName>Terpene synthase 5</fullName>
        <shortName>LdTPS5</shortName>
    </alternativeName>
</protein>